<name>ADDA_STRS2</name>
<sequence>MDGTNERRSGLMAFEQFLSAEEIKAVQLAEAHSDKQQKRTAEQIEAIYTHGQNVLVSASAGSGKTFVMVQRILDKLKRGIGIDQLFISTFTVKAAGELKERIEKKLNETIAETTDMELRRHLSAQLADLTKADIGTMDSFTQKLVTTYGYSLGISPQFRILQDETEKASLKKEVFDQLFADYLEEDENGAFRKLVRNFSGNRKDNSGFRQVVYQVHDFSQSTSSPTKWLKEQAVQADLYSQERIEQMLEQGFKEKVLDKLYQAADFFRYHVEWGRNDFGSAKYFANVEEVLDLLTGLDSLDQKDLMERVERILLINNQSRGKGLTNANRPKDEHLIAFKEEYNAGKSQIISELRDLGQEVYELTLLKDYQVQALPLLILLRDFVLDFSQAYLDVKIKEAAFEFGDIGHFAIRILEENADIRQFFQEKYHEVMVDEYQDNNHSQERMLDLLSNGHNRFMVGDIKQSIYRFRQADPMIFQEKFELYQANPQSGKLILLKENFRSQIEVLEATNAIFTRLMDRQVGEIKYDDTHSLVAGSPGQKIAQPKNEMEYLIYDQQDSANSSTDAEEETPLTAGEIEVVAKEIIRLHNEEGADFKDITLLVQKRTHNDLIMSIFEKHGIPIVADGGAASYLQSLEVMIMLDTLRVINNPLNDYALVALLKSPMFRFDEDELTRISLQAGTGFFYQKMEIAQQASGQHPELMSEKLKKKITDFLSILENWRAYAKLHSIYDMIWKMFNEKFYYDYVGALPNGSKRQANLYALGLRANQFEKTGYKGLSRFIAMIDRALANDKDLADVQEFLPQNAVQLMTIHKSKGLEFKYVFLMNIDKRFNLEDHYQSVIISRKNGLGIQYLADMKDKVNSPLPQVRVLMNTLPYQNNLQELKIANLSEQMRLLYVALTRAEKKLYLVGKGNADKLAEKYDGKKENGVLAQSTRESMATFQDWILAIDEAFSGEDLHFKKVFVTDEDLTEEKIGKLTLKSKLEDASLKDIRQSEDIAQALDQLSSVQELNERYKAAIELPSLRTPSQIKKLYEPILEQEGMEVMEKYQPKRTFNLPDFSKKPKITGAQVGSAVHELMQRLDLSWLVTEDTVRAALEAVHAEQAIKDKINVQMILDFFDTDLGREILANTDKLHREAPFASLQTDSVSQENFVLRGIIDGYLLYDDHIVLFDYKTDKYDQPIQLSQRYQAQMQLYAEALKKAYKIDRVDCHLILLGGERIEVVEVNI</sequence>
<organism>
    <name type="scientific">Streptococcus suis (strain 98HAH33)</name>
    <dbReference type="NCBI Taxonomy" id="391296"/>
    <lineage>
        <taxon>Bacteria</taxon>
        <taxon>Bacillati</taxon>
        <taxon>Bacillota</taxon>
        <taxon>Bacilli</taxon>
        <taxon>Lactobacillales</taxon>
        <taxon>Streptococcaceae</taxon>
        <taxon>Streptococcus</taxon>
    </lineage>
</organism>
<keyword id="KW-0067">ATP-binding</keyword>
<keyword id="KW-0227">DNA damage</keyword>
<keyword id="KW-0234">DNA repair</keyword>
<keyword id="KW-0238">DNA-binding</keyword>
<keyword id="KW-0269">Exonuclease</keyword>
<keyword id="KW-0347">Helicase</keyword>
<keyword id="KW-0378">Hydrolase</keyword>
<keyword id="KW-0413">Isomerase</keyword>
<keyword id="KW-0540">Nuclease</keyword>
<keyword id="KW-0547">Nucleotide-binding</keyword>
<comment type="function">
    <text evidence="1">The heterodimer acts as both an ATP-dependent DNA helicase and an ATP-dependent, dual-direction single-stranded exonuclease. Recognizes the chi site generating a DNA molecule suitable for the initiation of homologous recombination. The AddA nuclease domain is required for chi fragment generation; this subunit has the helicase and 3' -&gt; 5' nuclease activities.</text>
</comment>
<comment type="catalytic activity">
    <reaction evidence="1">
        <text>Couples ATP hydrolysis with the unwinding of duplex DNA by translocating in the 3'-5' direction.</text>
        <dbReference type="EC" id="5.6.2.4"/>
    </reaction>
</comment>
<comment type="catalytic activity">
    <reaction evidence="1">
        <text>ATP + H2O = ADP + phosphate + H(+)</text>
        <dbReference type="Rhea" id="RHEA:13065"/>
        <dbReference type="ChEBI" id="CHEBI:15377"/>
        <dbReference type="ChEBI" id="CHEBI:15378"/>
        <dbReference type="ChEBI" id="CHEBI:30616"/>
        <dbReference type="ChEBI" id="CHEBI:43474"/>
        <dbReference type="ChEBI" id="CHEBI:456216"/>
        <dbReference type="EC" id="5.6.2.4"/>
    </reaction>
</comment>
<comment type="cofactor">
    <cofactor evidence="1">
        <name>Mg(2+)</name>
        <dbReference type="ChEBI" id="CHEBI:18420"/>
    </cofactor>
</comment>
<comment type="subunit">
    <text evidence="1">Heterodimer of AddA and AddB/RexB.</text>
</comment>
<comment type="similarity">
    <text evidence="1">Belongs to the helicase family. AddA subfamily.</text>
</comment>
<reference key="1">
    <citation type="journal article" date="2007" name="PLoS ONE">
        <title>A glimpse of streptococcal toxic shock syndrome from comparative genomics of S. suis 2 Chinese isolates.</title>
        <authorList>
            <person name="Chen C."/>
            <person name="Tang J."/>
            <person name="Dong W."/>
            <person name="Wang C."/>
            <person name="Feng Y."/>
            <person name="Wang J."/>
            <person name="Zheng F."/>
            <person name="Pan X."/>
            <person name="Liu D."/>
            <person name="Li M."/>
            <person name="Song Y."/>
            <person name="Zhu X."/>
            <person name="Sun H."/>
            <person name="Feng T."/>
            <person name="Guo Z."/>
            <person name="Ju A."/>
            <person name="Ge J."/>
            <person name="Dong Y."/>
            <person name="Sun W."/>
            <person name="Jiang Y."/>
            <person name="Wang J."/>
            <person name="Yan J."/>
            <person name="Yang H."/>
            <person name="Wang X."/>
            <person name="Gao G.F."/>
            <person name="Yang R."/>
            <person name="Wang J."/>
            <person name="Yu J."/>
        </authorList>
    </citation>
    <scope>NUCLEOTIDE SEQUENCE [LARGE SCALE GENOMIC DNA]</scope>
    <source>
        <strain>98HAH33</strain>
    </source>
</reference>
<proteinExistence type="inferred from homology"/>
<feature type="chain" id="PRO_0000379353" description="ATP-dependent helicase/nuclease subunit A">
    <location>
        <begin position="1"/>
        <end position="1227"/>
    </location>
</feature>
<feature type="domain" description="UvrD-like helicase ATP-binding" evidence="1">
    <location>
        <begin position="37"/>
        <end position="503"/>
    </location>
</feature>
<feature type="domain" description="UvrD-like helicase C-terminal" evidence="1">
    <location>
        <begin position="532"/>
        <end position="816"/>
    </location>
</feature>
<feature type="binding site" evidence="1">
    <location>
        <begin position="58"/>
        <end position="65"/>
    </location>
    <ligand>
        <name>ATP</name>
        <dbReference type="ChEBI" id="CHEBI:30616"/>
    </ligand>
</feature>
<gene>
    <name evidence="1" type="primary">addA</name>
    <name type="ordered locus">SSU98_0758</name>
</gene>
<accession>A4W0M7</accession>
<dbReference type="EC" id="3.1.-.-" evidence="1"/>
<dbReference type="EC" id="5.6.2.4" evidence="1"/>
<dbReference type="EMBL" id="CP000408">
    <property type="protein sequence ID" value="ABP91916.1"/>
    <property type="molecule type" value="Genomic_DNA"/>
</dbReference>
<dbReference type="SMR" id="A4W0M7"/>
<dbReference type="KEGG" id="ssv:SSU98_0758"/>
<dbReference type="HOGENOM" id="CLU_001114_3_1_9"/>
<dbReference type="GO" id="GO:0005829">
    <property type="term" value="C:cytosol"/>
    <property type="evidence" value="ECO:0007669"/>
    <property type="project" value="TreeGrafter"/>
</dbReference>
<dbReference type="GO" id="GO:0033202">
    <property type="term" value="C:DNA helicase complex"/>
    <property type="evidence" value="ECO:0007669"/>
    <property type="project" value="TreeGrafter"/>
</dbReference>
<dbReference type="GO" id="GO:0043138">
    <property type="term" value="F:3'-5' DNA helicase activity"/>
    <property type="evidence" value="ECO:0007669"/>
    <property type="project" value="UniProtKB-UniRule"/>
</dbReference>
<dbReference type="GO" id="GO:0008408">
    <property type="term" value="F:3'-5' exonuclease activity"/>
    <property type="evidence" value="ECO:0007669"/>
    <property type="project" value="UniProtKB-UniRule"/>
</dbReference>
<dbReference type="GO" id="GO:0005524">
    <property type="term" value="F:ATP binding"/>
    <property type="evidence" value="ECO:0007669"/>
    <property type="project" value="UniProtKB-UniRule"/>
</dbReference>
<dbReference type="GO" id="GO:0016887">
    <property type="term" value="F:ATP hydrolysis activity"/>
    <property type="evidence" value="ECO:0007669"/>
    <property type="project" value="RHEA"/>
</dbReference>
<dbReference type="GO" id="GO:0003690">
    <property type="term" value="F:double-stranded DNA binding"/>
    <property type="evidence" value="ECO:0007669"/>
    <property type="project" value="UniProtKB-UniRule"/>
</dbReference>
<dbReference type="GO" id="GO:0000724">
    <property type="term" value="P:double-strand break repair via homologous recombination"/>
    <property type="evidence" value="ECO:0007669"/>
    <property type="project" value="UniProtKB-UniRule"/>
</dbReference>
<dbReference type="CDD" id="cd17932">
    <property type="entry name" value="DEXQc_UvrD"/>
    <property type="match status" value="1"/>
</dbReference>
<dbReference type="Gene3D" id="3.90.320.10">
    <property type="match status" value="1"/>
</dbReference>
<dbReference type="Gene3D" id="3.40.50.300">
    <property type="entry name" value="P-loop containing nucleotide triphosphate hydrolases"/>
    <property type="match status" value="4"/>
</dbReference>
<dbReference type="Gene3D" id="1.10.486.10">
    <property type="entry name" value="PCRA, domain 4"/>
    <property type="match status" value="1"/>
</dbReference>
<dbReference type="HAMAP" id="MF_01451">
    <property type="entry name" value="AddA"/>
    <property type="match status" value="1"/>
</dbReference>
<dbReference type="InterPro" id="IPR014152">
    <property type="entry name" value="AddA"/>
</dbReference>
<dbReference type="InterPro" id="IPR014017">
    <property type="entry name" value="DNA_helicase_UvrD-like_C"/>
</dbReference>
<dbReference type="InterPro" id="IPR000212">
    <property type="entry name" value="DNA_helicase_UvrD/REP"/>
</dbReference>
<dbReference type="InterPro" id="IPR027417">
    <property type="entry name" value="P-loop_NTPase"/>
</dbReference>
<dbReference type="InterPro" id="IPR011604">
    <property type="entry name" value="PDDEXK-like_dom_sf"/>
</dbReference>
<dbReference type="InterPro" id="IPR038726">
    <property type="entry name" value="PDDEXK_AddAB-type"/>
</dbReference>
<dbReference type="InterPro" id="IPR011335">
    <property type="entry name" value="Restrct_endonuc-II-like"/>
</dbReference>
<dbReference type="InterPro" id="IPR014016">
    <property type="entry name" value="UvrD-like_ATP-bd"/>
</dbReference>
<dbReference type="NCBIfam" id="TIGR02785">
    <property type="entry name" value="addA_Gpos"/>
    <property type="match status" value="1"/>
</dbReference>
<dbReference type="PANTHER" id="PTHR11070:SF48">
    <property type="entry name" value="ATP-DEPENDENT HELICASE_NUCLEASE SUBUNIT A"/>
    <property type="match status" value="1"/>
</dbReference>
<dbReference type="PANTHER" id="PTHR11070">
    <property type="entry name" value="UVRD / RECB / PCRA DNA HELICASE FAMILY MEMBER"/>
    <property type="match status" value="1"/>
</dbReference>
<dbReference type="Pfam" id="PF12705">
    <property type="entry name" value="PDDEXK_1"/>
    <property type="match status" value="1"/>
</dbReference>
<dbReference type="Pfam" id="PF00580">
    <property type="entry name" value="UvrD-helicase"/>
    <property type="match status" value="1"/>
</dbReference>
<dbReference type="Pfam" id="PF13361">
    <property type="entry name" value="UvrD_C"/>
    <property type="match status" value="1"/>
</dbReference>
<dbReference type="SUPFAM" id="SSF52540">
    <property type="entry name" value="P-loop containing nucleoside triphosphate hydrolases"/>
    <property type="match status" value="1"/>
</dbReference>
<dbReference type="SUPFAM" id="SSF52980">
    <property type="entry name" value="Restriction endonuclease-like"/>
    <property type="match status" value="1"/>
</dbReference>
<dbReference type="PROSITE" id="PS51198">
    <property type="entry name" value="UVRD_HELICASE_ATP_BIND"/>
    <property type="match status" value="1"/>
</dbReference>
<dbReference type="PROSITE" id="PS51217">
    <property type="entry name" value="UVRD_HELICASE_CTER"/>
    <property type="match status" value="1"/>
</dbReference>
<evidence type="ECO:0000255" key="1">
    <source>
        <dbReference type="HAMAP-Rule" id="MF_01451"/>
    </source>
</evidence>
<protein>
    <recommendedName>
        <fullName evidence="1">ATP-dependent helicase/nuclease subunit A</fullName>
        <ecNumber evidence="1">3.1.-.-</ecNumber>
        <ecNumber evidence="1">5.6.2.4</ecNumber>
    </recommendedName>
    <alternativeName>
        <fullName evidence="1">ATP-dependent helicase/nuclease AddA</fullName>
    </alternativeName>
    <alternativeName>
        <fullName evidence="1">DNA 3'-5' helicase AddA</fullName>
    </alternativeName>
</protein>